<sequence length="403" mass="44817">MSEQKKVVLAYSGGLDTSVAIKWLQEQGYNVIACCLDVGEGKDLAFVQQKALEVGATNSYVIDAKEEFAQDYALISLQAHTMYEGKYPLVSALSRPLIAKKLVEIAEKEDAQAIAHGCTGKGNDQVRFEVSIKSLNPDLEVIAPVREWQWSREEEIEYAASRGIPIPINLDSPYSIDQNLWGRANECGILEDPWAAPPEGAYDLTAPLEKTPDTPEVIEIAFEQGVPVSIDGVSYSLSELILKLNEMAGAHGVGRIDHVENRLVGIKSREVYECPGAMTLIKAHKELEDLTLVKEVAHFKPIIEQKMSEIIYNGLWFSPLKDALHAFLKETQKHVTGIVRVKLFKGHAIVEGRKSEYSLYDEKLATYTKDDAFDHHAAIGFIELWGLPTKVNSIVKKKEQIKA</sequence>
<protein>
    <recommendedName>
        <fullName evidence="1">Argininosuccinate synthase</fullName>
        <ecNumber evidence="1">6.3.4.5</ecNumber>
    </recommendedName>
    <alternativeName>
        <fullName evidence="1">Citrulline--aspartate ligase</fullName>
    </alternativeName>
</protein>
<dbReference type="EC" id="6.3.4.5" evidence="1"/>
<dbReference type="EMBL" id="AF008220">
    <property type="protein sequence ID" value="AAC00320.1"/>
    <property type="molecule type" value="Genomic_DNA"/>
</dbReference>
<dbReference type="EMBL" id="AL009126">
    <property type="protein sequence ID" value="CAB14905.1"/>
    <property type="molecule type" value="Genomic_DNA"/>
</dbReference>
<dbReference type="PIR" id="B69589">
    <property type="entry name" value="B69589"/>
</dbReference>
<dbReference type="RefSeq" id="NP_390823.1">
    <property type="nucleotide sequence ID" value="NC_000964.3"/>
</dbReference>
<dbReference type="RefSeq" id="WP_003229357.1">
    <property type="nucleotide sequence ID" value="NZ_OZ025638.1"/>
</dbReference>
<dbReference type="SMR" id="O34347"/>
<dbReference type="FunCoup" id="O34347">
    <property type="interactions" value="588"/>
</dbReference>
<dbReference type="IntAct" id="O34347">
    <property type="interactions" value="2"/>
</dbReference>
<dbReference type="MINT" id="O34347"/>
<dbReference type="STRING" id="224308.BSU29450"/>
<dbReference type="PaxDb" id="224308-BSU29450"/>
<dbReference type="EnsemblBacteria" id="CAB14905">
    <property type="protein sequence ID" value="CAB14905"/>
    <property type="gene ID" value="BSU_29450"/>
</dbReference>
<dbReference type="GeneID" id="937348"/>
<dbReference type="KEGG" id="bsu:BSU29450"/>
<dbReference type="PATRIC" id="fig|224308.179.peg.3199"/>
<dbReference type="eggNOG" id="COG0137">
    <property type="taxonomic scope" value="Bacteria"/>
</dbReference>
<dbReference type="InParanoid" id="O34347"/>
<dbReference type="OrthoDB" id="9801641at2"/>
<dbReference type="PhylomeDB" id="O34347"/>
<dbReference type="BioCyc" id="BSUB:BSU29450-MONOMER"/>
<dbReference type="UniPathway" id="UPA00068">
    <property type="reaction ID" value="UER00113"/>
</dbReference>
<dbReference type="Proteomes" id="UP000001570">
    <property type="component" value="Chromosome"/>
</dbReference>
<dbReference type="GO" id="GO:0005737">
    <property type="term" value="C:cytoplasm"/>
    <property type="evidence" value="ECO:0000318"/>
    <property type="project" value="GO_Central"/>
</dbReference>
<dbReference type="GO" id="GO:0004055">
    <property type="term" value="F:argininosuccinate synthase activity"/>
    <property type="evidence" value="ECO:0000318"/>
    <property type="project" value="GO_Central"/>
</dbReference>
<dbReference type="GO" id="GO:0005524">
    <property type="term" value="F:ATP binding"/>
    <property type="evidence" value="ECO:0007669"/>
    <property type="project" value="UniProtKB-UniRule"/>
</dbReference>
<dbReference type="GO" id="GO:0000053">
    <property type="term" value="P:argininosuccinate metabolic process"/>
    <property type="evidence" value="ECO:0000318"/>
    <property type="project" value="GO_Central"/>
</dbReference>
<dbReference type="GO" id="GO:0006526">
    <property type="term" value="P:L-arginine biosynthetic process"/>
    <property type="evidence" value="ECO:0000318"/>
    <property type="project" value="GO_Central"/>
</dbReference>
<dbReference type="GO" id="GO:0000050">
    <property type="term" value="P:urea cycle"/>
    <property type="evidence" value="ECO:0000318"/>
    <property type="project" value="GO_Central"/>
</dbReference>
<dbReference type="CDD" id="cd01999">
    <property type="entry name" value="ASS"/>
    <property type="match status" value="1"/>
</dbReference>
<dbReference type="FunFam" id="1.20.5.470:FF:000002">
    <property type="entry name" value="Argininosuccinate synthase"/>
    <property type="match status" value="1"/>
</dbReference>
<dbReference type="FunFam" id="3.40.50.620:FF:000038">
    <property type="entry name" value="Argininosuccinate synthase"/>
    <property type="match status" value="1"/>
</dbReference>
<dbReference type="FunFam" id="3.90.1260.10:FF:000007">
    <property type="entry name" value="Argininosuccinate synthase"/>
    <property type="match status" value="1"/>
</dbReference>
<dbReference type="Gene3D" id="3.90.1260.10">
    <property type="entry name" value="Argininosuccinate synthetase, chain A, domain 2"/>
    <property type="match status" value="1"/>
</dbReference>
<dbReference type="Gene3D" id="3.40.50.620">
    <property type="entry name" value="HUPs"/>
    <property type="match status" value="1"/>
</dbReference>
<dbReference type="Gene3D" id="1.20.5.470">
    <property type="entry name" value="Single helix bin"/>
    <property type="match status" value="1"/>
</dbReference>
<dbReference type="HAMAP" id="MF_00005">
    <property type="entry name" value="Arg_succ_synth_type1"/>
    <property type="match status" value="1"/>
</dbReference>
<dbReference type="InterPro" id="IPR048268">
    <property type="entry name" value="Arginosuc_syn_C"/>
</dbReference>
<dbReference type="InterPro" id="IPR048267">
    <property type="entry name" value="Arginosuc_syn_N"/>
</dbReference>
<dbReference type="InterPro" id="IPR001518">
    <property type="entry name" value="Arginosuc_synth"/>
</dbReference>
<dbReference type="InterPro" id="IPR018223">
    <property type="entry name" value="Arginosuc_synth_CS"/>
</dbReference>
<dbReference type="InterPro" id="IPR023434">
    <property type="entry name" value="Arginosuc_synth_type_1_subfam"/>
</dbReference>
<dbReference type="InterPro" id="IPR024074">
    <property type="entry name" value="AS_cat/multimer_dom_body"/>
</dbReference>
<dbReference type="InterPro" id="IPR014729">
    <property type="entry name" value="Rossmann-like_a/b/a_fold"/>
</dbReference>
<dbReference type="NCBIfam" id="TIGR00032">
    <property type="entry name" value="argG"/>
    <property type="match status" value="1"/>
</dbReference>
<dbReference type="NCBIfam" id="NF001770">
    <property type="entry name" value="PRK00509.1"/>
    <property type="match status" value="1"/>
</dbReference>
<dbReference type="PANTHER" id="PTHR11587">
    <property type="entry name" value="ARGININOSUCCINATE SYNTHASE"/>
    <property type="match status" value="1"/>
</dbReference>
<dbReference type="PANTHER" id="PTHR11587:SF2">
    <property type="entry name" value="ARGININOSUCCINATE SYNTHASE"/>
    <property type="match status" value="1"/>
</dbReference>
<dbReference type="Pfam" id="PF20979">
    <property type="entry name" value="Arginosuc_syn_C"/>
    <property type="match status" value="1"/>
</dbReference>
<dbReference type="Pfam" id="PF00764">
    <property type="entry name" value="Arginosuc_synth"/>
    <property type="match status" value="1"/>
</dbReference>
<dbReference type="SUPFAM" id="SSF52402">
    <property type="entry name" value="Adenine nucleotide alpha hydrolases-like"/>
    <property type="match status" value="1"/>
</dbReference>
<dbReference type="SUPFAM" id="SSF69864">
    <property type="entry name" value="Argininosuccinate synthetase, C-terminal domain"/>
    <property type="match status" value="1"/>
</dbReference>
<dbReference type="PROSITE" id="PS00564">
    <property type="entry name" value="ARGININOSUCCIN_SYN_1"/>
    <property type="match status" value="1"/>
</dbReference>
<dbReference type="PROSITE" id="PS00565">
    <property type="entry name" value="ARGININOSUCCIN_SYN_2"/>
    <property type="match status" value="1"/>
</dbReference>
<proteinExistence type="inferred from homology"/>
<reference key="1">
    <citation type="journal article" date="1997" name="Microbiology">
        <title>Sequencing and functional annotation of the Bacillus subtilis genes in the 200 kb rrnB-dnaB region.</title>
        <authorList>
            <person name="Lapidus A."/>
            <person name="Galleron N."/>
            <person name="Sorokin A."/>
            <person name="Ehrlich S.D."/>
        </authorList>
    </citation>
    <scope>NUCLEOTIDE SEQUENCE [GENOMIC DNA]</scope>
    <source>
        <strain>168</strain>
    </source>
</reference>
<reference key="2">
    <citation type="journal article" date="1997" name="Nature">
        <title>The complete genome sequence of the Gram-positive bacterium Bacillus subtilis.</title>
        <authorList>
            <person name="Kunst F."/>
            <person name="Ogasawara N."/>
            <person name="Moszer I."/>
            <person name="Albertini A.M."/>
            <person name="Alloni G."/>
            <person name="Azevedo V."/>
            <person name="Bertero M.G."/>
            <person name="Bessieres P."/>
            <person name="Bolotin A."/>
            <person name="Borchert S."/>
            <person name="Borriss R."/>
            <person name="Boursier L."/>
            <person name="Brans A."/>
            <person name="Braun M."/>
            <person name="Brignell S.C."/>
            <person name="Bron S."/>
            <person name="Brouillet S."/>
            <person name="Bruschi C.V."/>
            <person name="Caldwell B."/>
            <person name="Capuano V."/>
            <person name="Carter N.M."/>
            <person name="Choi S.-K."/>
            <person name="Codani J.-J."/>
            <person name="Connerton I.F."/>
            <person name="Cummings N.J."/>
            <person name="Daniel R.A."/>
            <person name="Denizot F."/>
            <person name="Devine K.M."/>
            <person name="Duesterhoeft A."/>
            <person name="Ehrlich S.D."/>
            <person name="Emmerson P.T."/>
            <person name="Entian K.-D."/>
            <person name="Errington J."/>
            <person name="Fabret C."/>
            <person name="Ferrari E."/>
            <person name="Foulger D."/>
            <person name="Fritz C."/>
            <person name="Fujita M."/>
            <person name="Fujita Y."/>
            <person name="Fuma S."/>
            <person name="Galizzi A."/>
            <person name="Galleron N."/>
            <person name="Ghim S.-Y."/>
            <person name="Glaser P."/>
            <person name="Goffeau A."/>
            <person name="Golightly E.J."/>
            <person name="Grandi G."/>
            <person name="Guiseppi G."/>
            <person name="Guy B.J."/>
            <person name="Haga K."/>
            <person name="Haiech J."/>
            <person name="Harwood C.R."/>
            <person name="Henaut A."/>
            <person name="Hilbert H."/>
            <person name="Holsappel S."/>
            <person name="Hosono S."/>
            <person name="Hullo M.-F."/>
            <person name="Itaya M."/>
            <person name="Jones L.-M."/>
            <person name="Joris B."/>
            <person name="Karamata D."/>
            <person name="Kasahara Y."/>
            <person name="Klaerr-Blanchard M."/>
            <person name="Klein C."/>
            <person name="Kobayashi Y."/>
            <person name="Koetter P."/>
            <person name="Koningstein G."/>
            <person name="Krogh S."/>
            <person name="Kumano M."/>
            <person name="Kurita K."/>
            <person name="Lapidus A."/>
            <person name="Lardinois S."/>
            <person name="Lauber J."/>
            <person name="Lazarevic V."/>
            <person name="Lee S.-M."/>
            <person name="Levine A."/>
            <person name="Liu H."/>
            <person name="Masuda S."/>
            <person name="Mauel C."/>
            <person name="Medigue C."/>
            <person name="Medina N."/>
            <person name="Mellado R.P."/>
            <person name="Mizuno M."/>
            <person name="Moestl D."/>
            <person name="Nakai S."/>
            <person name="Noback M."/>
            <person name="Noone D."/>
            <person name="O'Reilly M."/>
            <person name="Ogawa K."/>
            <person name="Ogiwara A."/>
            <person name="Oudega B."/>
            <person name="Park S.-H."/>
            <person name="Parro V."/>
            <person name="Pohl T.M."/>
            <person name="Portetelle D."/>
            <person name="Porwollik S."/>
            <person name="Prescott A.M."/>
            <person name="Presecan E."/>
            <person name="Pujic P."/>
            <person name="Purnelle B."/>
            <person name="Rapoport G."/>
            <person name="Rey M."/>
            <person name="Reynolds S."/>
            <person name="Rieger M."/>
            <person name="Rivolta C."/>
            <person name="Rocha E."/>
            <person name="Roche B."/>
            <person name="Rose M."/>
            <person name="Sadaie Y."/>
            <person name="Sato T."/>
            <person name="Scanlan E."/>
            <person name="Schleich S."/>
            <person name="Schroeter R."/>
            <person name="Scoffone F."/>
            <person name="Sekiguchi J."/>
            <person name="Sekowska A."/>
            <person name="Seror S.J."/>
            <person name="Serror P."/>
            <person name="Shin B.-S."/>
            <person name="Soldo B."/>
            <person name="Sorokin A."/>
            <person name="Tacconi E."/>
            <person name="Takagi T."/>
            <person name="Takahashi H."/>
            <person name="Takemaru K."/>
            <person name="Takeuchi M."/>
            <person name="Tamakoshi A."/>
            <person name="Tanaka T."/>
            <person name="Terpstra P."/>
            <person name="Tognoni A."/>
            <person name="Tosato V."/>
            <person name="Uchiyama S."/>
            <person name="Vandenbol M."/>
            <person name="Vannier F."/>
            <person name="Vassarotti A."/>
            <person name="Viari A."/>
            <person name="Wambutt R."/>
            <person name="Wedler E."/>
            <person name="Wedler H."/>
            <person name="Weitzenegger T."/>
            <person name="Winters P."/>
            <person name="Wipat A."/>
            <person name="Yamamoto H."/>
            <person name="Yamane K."/>
            <person name="Yasumoto K."/>
            <person name="Yata K."/>
            <person name="Yoshida K."/>
            <person name="Yoshikawa H.-F."/>
            <person name="Zumstein E."/>
            <person name="Yoshikawa H."/>
            <person name="Danchin A."/>
        </authorList>
    </citation>
    <scope>NUCLEOTIDE SEQUENCE [LARGE SCALE GENOMIC DNA]</scope>
    <source>
        <strain>168</strain>
    </source>
</reference>
<gene>
    <name evidence="1" type="primary">argG</name>
    <name type="ordered locus">BSU29450</name>
</gene>
<keyword id="KW-0028">Amino-acid biosynthesis</keyword>
<keyword id="KW-0055">Arginine biosynthesis</keyword>
<keyword id="KW-0067">ATP-binding</keyword>
<keyword id="KW-0963">Cytoplasm</keyword>
<keyword id="KW-0436">Ligase</keyword>
<keyword id="KW-0547">Nucleotide-binding</keyword>
<keyword id="KW-1185">Reference proteome</keyword>
<name>ASSY_BACSU</name>
<accession>O34347</accession>
<comment type="catalytic activity">
    <reaction evidence="1">
        <text>L-citrulline + L-aspartate + ATP = 2-(N(omega)-L-arginino)succinate + AMP + diphosphate + H(+)</text>
        <dbReference type="Rhea" id="RHEA:10932"/>
        <dbReference type="ChEBI" id="CHEBI:15378"/>
        <dbReference type="ChEBI" id="CHEBI:29991"/>
        <dbReference type="ChEBI" id="CHEBI:30616"/>
        <dbReference type="ChEBI" id="CHEBI:33019"/>
        <dbReference type="ChEBI" id="CHEBI:57472"/>
        <dbReference type="ChEBI" id="CHEBI:57743"/>
        <dbReference type="ChEBI" id="CHEBI:456215"/>
        <dbReference type="EC" id="6.3.4.5"/>
    </reaction>
</comment>
<comment type="pathway">
    <text evidence="1">Amino-acid biosynthesis; L-arginine biosynthesis; L-arginine from L-ornithine and carbamoyl phosphate: step 2/3.</text>
</comment>
<comment type="subunit">
    <text evidence="1">Homotetramer.</text>
</comment>
<comment type="subcellular location">
    <subcellularLocation>
        <location evidence="1">Cytoplasm</location>
    </subcellularLocation>
</comment>
<comment type="similarity">
    <text evidence="1">Belongs to the argininosuccinate synthase family. Type 1 subfamily.</text>
</comment>
<organism>
    <name type="scientific">Bacillus subtilis (strain 168)</name>
    <dbReference type="NCBI Taxonomy" id="224308"/>
    <lineage>
        <taxon>Bacteria</taxon>
        <taxon>Bacillati</taxon>
        <taxon>Bacillota</taxon>
        <taxon>Bacilli</taxon>
        <taxon>Bacillales</taxon>
        <taxon>Bacillaceae</taxon>
        <taxon>Bacillus</taxon>
    </lineage>
</organism>
<evidence type="ECO:0000255" key="1">
    <source>
        <dbReference type="HAMAP-Rule" id="MF_00005"/>
    </source>
</evidence>
<feature type="chain" id="PRO_0000148572" description="Argininosuccinate synthase">
    <location>
        <begin position="1"/>
        <end position="403"/>
    </location>
</feature>
<feature type="binding site" evidence="1">
    <location>
        <begin position="10"/>
        <end position="18"/>
    </location>
    <ligand>
        <name>ATP</name>
        <dbReference type="ChEBI" id="CHEBI:30616"/>
    </ligand>
</feature>
<feature type="binding site" evidence="1">
    <location>
        <position position="87"/>
    </location>
    <ligand>
        <name>L-citrulline</name>
        <dbReference type="ChEBI" id="CHEBI:57743"/>
    </ligand>
</feature>
<feature type="binding site" evidence="1">
    <location>
        <position position="117"/>
    </location>
    <ligand>
        <name>ATP</name>
        <dbReference type="ChEBI" id="CHEBI:30616"/>
    </ligand>
</feature>
<feature type="binding site" evidence="1">
    <location>
        <position position="119"/>
    </location>
    <ligand>
        <name>L-aspartate</name>
        <dbReference type="ChEBI" id="CHEBI:29991"/>
    </ligand>
</feature>
<feature type="binding site" evidence="1">
    <location>
        <position position="123"/>
    </location>
    <ligand>
        <name>L-aspartate</name>
        <dbReference type="ChEBI" id="CHEBI:29991"/>
    </ligand>
</feature>
<feature type="binding site" evidence="1">
    <location>
        <position position="123"/>
    </location>
    <ligand>
        <name>L-citrulline</name>
        <dbReference type="ChEBI" id="CHEBI:57743"/>
    </ligand>
</feature>
<feature type="binding site" evidence="1">
    <location>
        <position position="124"/>
    </location>
    <ligand>
        <name>L-aspartate</name>
        <dbReference type="ChEBI" id="CHEBI:29991"/>
    </ligand>
</feature>
<feature type="binding site" evidence="1">
    <location>
        <position position="127"/>
    </location>
    <ligand>
        <name>L-citrulline</name>
        <dbReference type="ChEBI" id="CHEBI:57743"/>
    </ligand>
</feature>
<feature type="binding site" evidence="1">
    <location>
        <position position="175"/>
    </location>
    <ligand>
        <name>L-citrulline</name>
        <dbReference type="ChEBI" id="CHEBI:57743"/>
    </ligand>
</feature>
<feature type="binding site" evidence="1">
    <location>
        <position position="260"/>
    </location>
    <ligand>
        <name>L-citrulline</name>
        <dbReference type="ChEBI" id="CHEBI:57743"/>
    </ligand>
</feature>
<feature type="binding site" evidence="1">
    <location>
        <position position="272"/>
    </location>
    <ligand>
        <name>L-citrulline</name>
        <dbReference type="ChEBI" id="CHEBI:57743"/>
    </ligand>
</feature>